<organism>
    <name type="scientific">Escherichia phage 186</name>
    <name type="common">Bacteriophage 186</name>
    <dbReference type="NCBI Taxonomy" id="29252"/>
    <lineage>
        <taxon>Viruses</taxon>
        <taxon>Duplodnaviria</taxon>
        <taxon>Heunggongvirae</taxon>
        <taxon>Uroviricota</taxon>
        <taxon>Caudoviricetes</taxon>
        <taxon>Peduoviridae</taxon>
        <taxon>Eganvirus</taxon>
    </lineage>
</organism>
<dbReference type="EMBL" id="U32222">
    <property type="protein sequence ID" value="AAC34177.1"/>
    <property type="molecule type" value="Genomic_DNA"/>
</dbReference>
<dbReference type="PIR" id="S09534">
    <property type="entry name" value="S09534"/>
</dbReference>
<dbReference type="RefSeq" id="NP_052280.1">
    <property type="nucleotide sequence ID" value="NC_001317.1"/>
</dbReference>
<dbReference type="GeneID" id="1262426"/>
<dbReference type="KEGG" id="vg:1262426"/>
<dbReference type="OrthoDB" id="34481at10239"/>
<dbReference type="Proteomes" id="UP000000369">
    <property type="component" value="Segment"/>
</dbReference>
<dbReference type="GO" id="GO:0003677">
    <property type="term" value="F:DNA binding"/>
    <property type="evidence" value="ECO:0007669"/>
    <property type="project" value="UniProtKB-KW"/>
</dbReference>
<gene>
    <name type="primary">apl</name>
    <name type="synonym">CP75</name>
</gene>
<proteinExistence type="predicted"/>
<reference key="1">
    <citation type="journal article" date="1986" name="J. Mol. Biol.">
        <title>Control of gene expression in the P2-related template coliphages. III. DNA sequence of the major control region of phage 186.</title>
        <authorList>
            <person name="Kalionis B."/>
            <person name="Dodd I.B."/>
            <person name="Egan J.B."/>
        </authorList>
    </citation>
    <scope>NUCLEOTIDE SEQUENCE [GENOMIC DNA]</scope>
    <source>
        <strain>186CITSP</strain>
    </source>
</reference>
<reference key="2">
    <citation type="journal article" date="1990" name="J. Mol. Biol.">
        <title>Control of gene expression in the temperate coliphage 186. VIII. Control of lysis and lysogeny by a transcriptional switch involving face-to-face promoters.</title>
        <authorList>
            <person name="Dodd I.B."/>
            <person name="Kalionis B."/>
            <person name="Egan J.B."/>
        </authorList>
    </citation>
    <scope>NUCLEOTIDE SEQUENCE [GENOMIC DNA]</scope>
</reference>
<name>VAPL_BP186</name>
<accession>P21681</accession>
<sequence length="87" mass="9781">MASEIAIIKVPAPIVTLQQFAELEGVSERTAYRWTTGDNPCVPIEPRTIRKGCKKAGGPIRIYYARWKEEQLRKALGHSRFQLVIGA</sequence>
<comment type="function">
    <text>Antagonizes transcription from pL during the lytic response.</text>
</comment>
<organismHost>
    <name type="scientific">Escherichia coli</name>
    <dbReference type="NCBI Taxonomy" id="562"/>
</organismHost>
<keyword id="KW-0238">DNA-binding</keyword>
<keyword id="KW-0244">Early protein</keyword>
<keyword id="KW-1185">Reference proteome</keyword>
<keyword id="KW-0804">Transcription</keyword>
<keyword id="KW-0805">Transcription regulation</keyword>
<protein>
    <recommendedName>
        <fullName>Protein apl</fullName>
    </recommendedName>
</protein>
<feature type="chain" id="PRO_0000165294" description="Protein apl">
    <location>
        <begin position="1"/>
        <end position="87"/>
    </location>
</feature>